<sequence length="14" mass="1762">MNAAIFRFFFYFST</sequence>
<name>LPF2_SHIFL</name>
<gene>
    <name type="primary">pheM</name>
    <name type="ordered locus">SF1516</name>
    <name type="ordered locus">S4806</name>
</gene>
<reference key="1">
    <citation type="journal article" date="2002" name="Nucleic Acids Res.">
        <title>Genome sequence of Shigella flexneri 2a: insights into pathogenicity through comparison with genomes of Escherichia coli K12 and O157.</title>
        <authorList>
            <person name="Jin Q."/>
            <person name="Yuan Z."/>
            <person name="Xu J."/>
            <person name="Wang Y."/>
            <person name="Shen Y."/>
            <person name="Lu W."/>
            <person name="Wang J."/>
            <person name="Liu H."/>
            <person name="Yang J."/>
            <person name="Yang F."/>
            <person name="Zhang X."/>
            <person name="Zhang J."/>
            <person name="Yang G."/>
            <person name="Wu H."/>
            <person name="Qu D."/>
            <person name="Dong J."/>
            <person name="Sun L."/>
            <person name="Xue Y."/>
            <person name="Zhao A."/>
            <person name="Gao Y."/>
            <person name="Zhu J."/>
            <person name="Kan B."/>
            <person name="Ding K."/>
            <person name="Chen S."/>
            <person name="Cheng H."/>
            <person name="Yao Z."/>
            <person name="He B."/>
            <person name="Chen R."/>
            <person name="Ma D."/>
            <person name="Qiang B."/>
            <person name="Wen Y."/>
            <person name="Hou Y."/>
            <person name="Yu J."/>
        </authorList>
    </citation>
    <scope>NUCLEOTIDE SEQUENCE [LARGE SCALE GENOMIC DNA]</scope>
    <source>
        <strain>301 / Serotype 2a</strain>
    </source>
</reference>
<reference key="2">
    <citation type="journal article" date="2003" name="Infect. Immun.">
        <title>Complete genome sequence and comparative genomics of Shigella flexneri serotype 2a strain 2457T.</title>
        <authorList>
            <person name="Wei J."/>
            <person name="Goldberg M.B."/>
            <person name="Burland V."/>
            <person name="Venkatesan M.M."/>
            <person name="Deng W."/>
            <person name="Fournier G."/>
            <person name="Mayhew G.F."/>
            <person name="Plunkett G. III"/>
            <person name="Rose D.J."/>
            <person name="Darling A."/>
            <person name="Mau B."/>
            <person name="Perna N.T."/>
            <person name="Payne S.M."/>
            <person name="Runyen-Janecky L.J."/>
            <person name="Zhou S."/>
            <person name="Schwartz D.C."/>
            <person name="Blattner F.R."/>
        </authorList>
    </citation>
    <scope>NUCLEOTIDE SEQUENCE [LARGE SCALE GENOMIC DNA]</scope>
    <source>
        <strain>ATCC 700930 / 2457T / Serotype 2a</strain>
    </source>
</reference>
<dbReference type="EMBL" id="AE005674">
    <property type="protein sequence ID" value="AAN43106.1"/>
    <property type="molecule type" value="Genomic_DNA"/>
</dbReference>
<dbReference type="EMBL" id="AE014073">
    <property type="protein sequence ID" value="AAP16996.1"/>
    <property type="molecule type" value="Genomic_DNA"/>
</dbReference>
<dbReference type="RefSeq" id="WP_001386830.1">
    <property type="nucleotide sequence ID" value="NZ_WPGW01000051.1"/>
</dbReference>
<dbReference type="GeneID" id="98388756"/>
<dbReference type="KEGG" id="sfx:S4806"/>
<dbReference type="HOGENOM" id="CLU_222433_0_0_6"/>
<dbReference type="Proteomes" id="UP000001006">
    <property type="component" value="Chromosome"/>
</dbReference>
<dbReference type="Proteomes" id="UP000002673">
    <property type="component" value="Chromosome"/>
</dbReference>
<dbReference type="InterPro" id="IPR049616">
    <property type="entry name" value="PheM"/>
</dbReference>
<dbReference type="NCBIfam" id="NF033686">
    <property type="entry name" value="leader_PheM_1"/>
    <property type="match status" value="1"/>
</dbReference>
<accession>P0AD78</accession>
<accession>P06985</accession>
<protein>
    <recommendedName>
        <fullName>Phenylalanyl--tRNA ligase operon leader peptide</fullName>
    </recommendedName>
    <alternativeName>
        <fullName>pheST attenuator peptide</fullName>
    </alternativeName>
</protein>
<organism>
    <name type="scientific">Shigella flexneri</name>
    <dbReference type="NCBI Taxonomy" id="623"/>
    <lineage>
        <taxon>Bacteria</taxon>
        <taxon>Pseudomonadati</taxon>
        <taxon>Pseudomonadota</taxon>
        <taxon>Gammaproteobacteria</taxon>
        <taxon>Enterobacterales</taxon>
        <taxon>Enterobacteriaceae</taxon>
        <taxon>Shigella</taxon>
    </lineage>
</organism>
<feature type="peptide" id="PRO_0000043985" description="Phenylalanyl--tRNA ligase operon leader peptide">
    <location>
        <begin position="1"/>
        <end position="14"/>
    </location>
</feature>
<proteinExistence type="predicted"/>
<keyword id="KW-0428">Leader peptide</keyword>
<keyword id="KW-1185">Reference proteome</keyword>